<dbReference type="EMBL" id="CR626927">
    <property type="protein sequence ID" value="CAH07797.1"/>
    <property type="molecule type" value="Genomic_DNA"/>
</dbReference>
<dbReference type="RefSeq" id="WP_010992848.1">
    <property type="nucleotide sequence ID" value="NC_003228.3"/>
</dbReference>
<dbReference type="SMR" id="Q5LDL2"/>
<dbReference type="PaxDb" id="272559-BF9343_2016"/>
<dbReference type="GeneID" id="60366732"/>
<dbReference type="KEGG" id="bfs:BF9343_2016"/>
<dbReference type="eggNOG" id="COG0218">
    <property type="taxonomic scope" value="Bacteria"/>
</dbReference>
<dbReference type="HOGENOM" id="CLU_033732_3_1_10"/>
<dbReference type="Proteomes" id="UP000006731">
    <property type="component" value="Chromosome"/>
</dbReference>
<dbReference type="GO" id="GO:0005525">
    <property type="term" value="F:GTP binding"/>
    <property type="evidence" value="ECO:0007669"/>
    <property type="project" value="UniProtKB-UniRule"/>
</dbReference>
<dbReference type="GO" id="GO:0046872">
    <property type="term" value="F:metal ion binding"/>
    <property type="evidence" value="ECO:0007669"/>
    <property type="project" value="UniProtKB-KW"/>
</dbReference>
<dbReference type="GO" id="GO:0000917">
    <property type="term" value="P:division septum assembly"/>
    <property type="evidence" value="ECO:0007669"/>
    <property type="project" value="UniProtKB-KW"/>
</dbReference>
<dbReference type="CDD" id="cd01876">
    <property type="entry name" value="YihA_EngB"/>
    <property type="match status" value="1"/>
</dbReference>
<dbReference type="FunFam" id="3.40.50.300:FF:000098">
    <property type="entry name" value="Probable GTP-binding protein EngB"/>
    <property type="match status" value="1"/>
</dbReference>
<dbReference type="Gene3D" id="3.40.50.300">
    <property type="entry name" value="P-loop containing nucleotide triphosphate hydrolases"/>
    <property type="match status" value="1"/>
</dbReference>
<dbReference type="HAMAP" id="MF_00321">
    <property type="entry name" value="GTPase_EngB"/>
    <property type="match status" value="1"/>
</dbReference>
<dbReference type="InterPro" id="IPR030393">
    <property type="entry name" value="G_ENGB_dom"/>
</dbReference>
<dbReference type="InterPro" id="IPR006073">
    <property type="entry name" value="GTP-bd"/>
</dbReference>
<dbReference type="InterPro" id="IPR019987">
    <property type="entry name" value="GTP-bd_ribosome_bio_YsxC"/>
</dbReference>
<dbReference type="InterPro" id="IPR027417">
    <property type="entry name" value="P-loop_NTPase"/>
</dbReference>
<dbReference type="NCBIfam" id="TIGR03598">
    <property type="entry name" value="GTPase_YsxC"/>
    <property type="match status" value="1"/>
</dbReference>
<dbReference type="PANTHER" id="PTHR11649:SF13">
    <property type="entry name" value="ENGB-TYPE G DOMAIN-CONTAINING PROTEIN"/>
    <property type="match status" value="1"/>
</dbReference>
<dbReference type="PANTHER" id="PTHR11649">
    <property type="entry name" value="MSS1/TRME-RELATED GTP-BINDING PROTEIN"/>
    <property type="match status" value="1"/>
</dbReference>
<dbReference type="Pfam" id="PF01926">
    <property type="entry name" value="MMR_HSR1"/>
    <property type="match status" value="1"/>
</dbReference>
<dbReference type="SUPFAM" id="SSF52540">
    <property type="entry name" value="P-loop containing nucleoside triphosphate hydrolases"/>
    <property type="match status" value="1"/>
</dbReference>
<dbReference type="PROSITE" id="PS51706">
    <property type="entry name" value="G_ENGB"/>
    <property type="match status" value="1"/>
</dbReference>
<feature type="chain" id="PRO_0000266819" description="Probable GTP-binding protein EngB">
    <location>
        <begin position="1"/>
        <end position="201"/>
    </location>
</feature>
<feature type="domain" description="EngB-type G" evidence="1">
    <location>
        <begin position="22"/>
        <end position="197"/>
    </location>
</feature>
<feature type="binding site" evidence="1">
    <location>
        <begin position="30"/>
        <end position="37"/>
    </location>
    <ligand>
        <name>GTP</name>
        <dbReference type="ChEBI" id="CHEBI:37565"/>
    </ligand>
</feature>
<feature type="binding site" evidence="1">
    <location>
        <position position="37"/>
    </location>
    <ligand>
        <name>Mg(2+)</name>
        <dbReference type="ChEBI" id="CHEBI:18420"/>
    </ligand>
</feature>
<feature type="binding site" evidence="1">
    <location>
        <begin position="57"/>
        <end position="61"/>
    </location>
    <ligand>
        <name>GTP</name>
        <dbReference type="ChEBI" id="CHEBI:37565"/>
    </ligand>
</feature>
<feature type="binding site" evidence="1">
    <location>
        <position position="59"/>
    </location>
    <ligand>
        <name>Mg(2+)</name>
        <dbReference type="ChEBI" id="CHEBI:18420"/>
    </ligand>
</feature>
<feature type="binding site" evidence="1">
    <location>
        <begin position="75"/>
        <end position="78"/>
    </location>
    <ligand>
        <name>GTP</name>
        <dbReference type="ChEBI" id="CHEBI:37565"/>
    </ligand>
</feature>
<feature type="binding site" evidence="1">
    <location>
        <begin position="142"/>
        <end position="145"/>
    </location>
    <ligand>
        <name>GTP</name>
        <dbReference type="ChEBI" id="CHEBI:37565"/>
    </ligand>
</feature>
<feature type="binding site" evidence="1">
    <location>
        <begin position="175"/>
        <end position="178"/>
    </location>
    <ligand>
        <name>GTP</name>
        <dbReference type="ChEBI" id="CHEBI:37565"/>
    </ligand>
</feature>
<organism>
    <name type="scientific">Bacteroides fragilis (strain ATCC 25285 / DSM 2151 / CCUG 4856 / JCM 11019 / LMG 10263 / NCTC 9343 / Onslow / VPI 2553 / EN-2)</name>
    <dbReference type="NCBI Taxonomy" id="272559"/>
    <lineage>
        <taxon>Bacteria</taxon>
        <taxon>Pseudomonadati</taxon>
        <taxon>Bacteroidota</taxon>
        <taxon>Bacteroidia</taxon>
        <taxon>Bacteroidales</taxon>
        <taxon>Bacteroidaceae</taxon>
        <taxon>Bacteroides</taxon>
    </lineage>
</organism>
<reference key="1">
    <citation type="journal article" date="2005" name="Science">
        <title>Extensive DNA inversions in the B. fragilis genome control variable gene expression.</title>
        <authorList>
            <person name="Cerdeno-Tarraga A.-M."/>
            <person name="Patrick S."/>
            <person name="Crossman L.C."/>
            <person name="Blakely G."/>
            <person name="Abratt V."/>
            <person name="Lennard N."/>
            <person name="Poxton I."/>
            <person name="Duerden B."/>
            <person name="Harris B."/>
            <person name="Quail M.A."/>
            <person name="Barron A."/>
            <person name="Clark L."/>
            <person name="Corton C."/>
            <person name="Doggett J."/>
            <person name="Holden M.T.G."/>
            <person name="Larke N."/>
            <person name="Line A."/>
            <person name="Lord A."/>
            <person name="Norbertczak H."/>
            <person name="Ormond D."/>
            <person name="Price C."/>
            <person name="Rabbinowitsch E."/>
            <person name="Woodward J."/>
            <person name="Barrell B.G."/>
            <person name="Parkhill J."/>
        </authorList>
    </citation>
    <scope>NUCLEOTIDE SEQUENCE [LARGE SCALE GENOMIC DNA]</scope>
    <source>
        <strain>ATCC 25285 / DSM 2151 / CCUG 4856 / JCM 11019 / LMG 10263 / NCTC 9343 / Onslow / VPI 2553 / EN-2</strain>
    </source>
</reference>
<keyword id="KW-0131">Cell cycle</keyword>
<keyword id="KW-0132">Cell division</keyword>
<keyword id="KW-0342">GTP-binding</keyword>
<keyword id="KW-0460">Magnesium</keyword>
<keyword id="KW-0479">Metal-binding</keyword>
<keyword id="KW-0547">Nucleotide-binding</keyword>
<keyword id="KW-0717">Septation</keyword>
<accession>Q5LDL2</accession>
<comment type="function">
    <text evidence="1">Necessary for normal cell division and for the maintenance of normal septation.</text>
</comment>
<comment type="cofactor">
    <cofactor evidence="1">
        <name>Mg(2+)</name>
        <dbReference type="ChEBI" id="CHEBI:18420"/>
    </cofactor>
</comment>
<comment type="similarity">
    <text evidence="1">Belongs to the TRAFAC class TrmE-Era-EngA-EngB-Septin-like GTPase superfamily. EngB GTPase family.</text>
</comment>
<evidence type="ECO:0000255" key="1">
    <source>
        <dbReference type="HAMAP-Rule" id="MF_00321"/>
    </source>
</evidence>
<sequence>MEITNAEFVISNTDVKKCPAGTFPEYAFIGRSNVGKSSLINMLTGRKGLAMTSATPGKTMLINHFLINNSWYLVDLPGYGYARRGQKGQKQIRTIIEDYILEREQMTNLFVLIDSRLEPQKIDLEFMEWLGENGIPFAIIFTKADKLKGGRLKINISAYLRELRKQWEELPPYFITSSEERLGRTEVLNYIESINKELNSK</sequence>
<gene>
    <name evidence="1" type="primary">engB</name>
    <name type="ordered locus">BF2101</name>
</gene>
<proteinExistence type="inferred from homology"/>
<protein>
    <recommendedName>
        <fullName evidence="1">Probable GTP-binding protein EngB</fullName>
    </recommendedName>
</protein>
<name>ENGB_BACFN</name>